<reference key="1">
    <citation type="submission" date="2007-12" db="EMBL/GenBank/DDBJ databases">
        <title>Complete sequence of Methylobacterium extorquens PA1.</title>
        <authorList>
            <consortium name="US DOE Joint Genome Institute"/>
            <person name="Copeland A."/>
            <person name="Lucas S."/>
            <person name="Lapidus A."/>
            <person name="Barry K."/>
            <person name="Glavina del Rio T."/>
            <person name="Dalin E."/>
            <person name="Tice H."/>
            <person name="Pitluck S."/>
            <person name="Saunders E."/>
            <person name="Brettin T."/>
            <person name="Bruce D."/>
            <person name="Detter J.C."/>
            <person name="Han C."/>
            <person name="Schmutz J."/>
            <person name="Larimer F."/>
            <person name="Land M."/>
            <person name="Hauser L."/>
            <person name="Kyrpides N."/>
            <person name="Kim E."/>
            <person name="Marx C."/>
            <person name="Richardson P."/>
        </authorList>
    </citation>
    <scope>NUCLEOTIDE SEQUENCE [LARGE SCALE GENOMIC DNA]</scope>
    <source>
        <strain>PA1</strain>
    </source>
</reference>
<name>BCHL_METEP</name>
<comment type="function">
    <text evidence="1">Component of the dark-operative protochlorophyllide reductase (DPOR) that uses Mg-ATP and reduced ferredoxin to reduce ring D of protochlorophyllide (Pchlide) to form chlorophyllide a (Chlide). This reaction is light-independent. The L component serves as a unique electron donor to the NB-component of the complex, and binds Mg-ATP.</text>
</comment>
<comment type="catalytic activity">
    <reaction evidence="1">
        <text>chlorophyllide a + oxidized 2[4Fe-4S]-[ferredoxin] + 2 ADP + 2 phosphate = protochlorophyllide a + reduced 2[4Fe-4S]-[ferredoxin] + 2 ATP + 2 H2O</text>
        <dbReference type="Rhea" id="RHEA:28202"/>
        <dbReference type="Rhea" id="RHEA-COMP:10002"/>
        <dbReference type="Rhea" id="RHEA-COMP:10004"/>
        <dbReference type="ChEBI" id="CHEBI:15377"/>
        <dbReference type="ChEBI" id="CHEBI:30616"/>
        <dbReference type="ChEBI" id="CHEBI:33722"/>
        <dbReference type="ChEBI" id="CHEBI:33723"/>
        <dbReference type="ChEBI" id="CHEBI:43474"/>
        <dbReference type="ChEBI" id="CHEBI:83348"/>
        <dbReference type="ChEBI" id="CHEBI:83350"/>
        <dbReference type="ChEBI" id="CHEBI:456216"/>
        <dbReference type="EC" id="1.3.7.7"/>
    </reaction>
</comment>
<comment type="cofactor">
    <cofactor evidence="1">
        <name>[4Fe-4S] cluster</name>
        <dbReference type="ChEBI" id="CHEBI:49883"/>
    </cofactor>
    <text evidence="1">Binds 1 [4Fe-4S] cluster per dimer.</text>
</comment>
<comment type="pathway">
    <text evidence="1">Porphyrin-containing compound metabolism; bacteriochlorophyll biosynthesis (light-independent).</text>
</comment>
<comment type="subunit">
    <text evidence="1">Homodimer. Protochlorophyllide reductase is composed of three subunits; BchL, BchN and BchB.</text>
</comment>
<comment type="similarity">
    <text evidence="1">Belongs to the NifH/BchL/ChlL family.</text>
</comment>
<keyword id="KW-0004">4Fe-4S</keyword>
<keyword id="KW-0067">ATP-binding</keyword>
<keyword id="KW-0077">Bacteriochlorophyll biosynthesis</keyword>
<keyword id="KW-0149">Chlorophyll biosynthesis</keyword>
<keyword id="KW-0408">Iron</keyword>
<keyword id="KW-0411">Iron-sulfur</keyword>
<keyword id="KW-0460">Magnesium</keyword>
<keyword id="KW-0479">Metal-binding</keyword>
<keyword id="KW-0547">Nucleotide-binding</keyword>
<keyword id="KW-0560">Oxidoreductase</keyword>
<keyword id="KW-0602">Photosynthesis</keyword>
<feature type="chain" id="PRO_1000133439" description="Light-independent protochlorophyllide reductase iron-sulfur ATP-binding protein">
    <location>
        <begin position="1"/>
        <end position="297"/>
    </location>
</feature>
<feature type="binding site" evidence="1">
    <location>
        <begin position="41"/>
        <end position="46"/>
    </location>
    <ligand>
        <name>ATP</name>
        <dbReference type="ChEBI" id="CHEBI:30616"/>
    </ligand>
</feature>
<feature type="binding site" evidence="1">
    <location>
        <position position="45"/>
    </location>
    <ligand>
        <name>Mg(2+)</name>
        <dbReference type="ChEBI" id="CHEBI:18420"/>
    </ligand>
</feature>
<feature type="binding site" evidence="1">
    <location>
        <position position="70"/>
    </location>
    <ligand>
        <name>ATP</name>
        <dbReference type="ChEBI" id="CHEBI:30616"/>
    </ligand>
</feature>
<feature type="binding site" evidence="1">
    <location>
        <position position="126"/>
    </location>
    <ligand>
        <name>[4Fe-4S] cluster</name>
        <dbReference type="ChEBI" id="CHEBI:49883"/>
        <note>ligand shared between dimeric partners</note>
    </ligand>
</feature>
<feature type="binding site" evidence="1">
    <location>
        <position position="160"/>
    </location>
    <ligand>
        <name>[4Fe-4S] cluster</name>
        <dbReference type="ChEBI" id="CHEBI:49883"/>
        <note>ligand shared between dimeric partners</note>
    </ligand>
</feature>
<feature type="binding site" evidence="1">
    <location>
        <begin position="211"/>
        <end position="212"/>
    </location>
    <ligand>
        <name>ATP</name>
        <dbReference type="ChEBI" id="CHEBI:30616"/>
    </ligand>
</feature>
<feature type="binding site" evidence="1">
    <location>
        <begin position="235"/>
        <end position="237"/>
    </location>
    <ligand>
        <name>ATP</name>
        <dbReference type="ChEBI" id="CHEBI:30616"/>
    </ligand>
</feature>
<accession>A9W9E2</accession>
<sequence length="297" mass="32247">MNIAIRNPVPIRREEGSLQVGLDPNDRIETAKVFAVYGKGGIGKSTTSSNLSVAFSKLGKRVLQIGCDPKHDSTFTLTKRLAPTVIDALEAVNFHSEELRAEDFVVEGYNGVKCVEAGGPPAGTGCGGYVVGQTVKLLKEHHLLEDTDVVVFDVLGDVVCGGFASPLQHADRALIVTANDFDSIFAMNRIVAAIHTKSKNYGVRLGGVIANRSAGTDEIDRFNAAVGLRRLAHFPDLDVVRRSRLKKATLFEMEPTPELKAVTDEYMQLAETLWAGADPCEAVPMKDRDLFEFLGFD</sequence>
<evidence type="ECO:0000255" key="1">
    <source>
        <dbReference type="HAMAP-Rule" id="MF_00355"/>
    </source>
</evidence>
<organism>
    <name type="scientific">Methylorubrum extorquens (strain PA1)</name>
    <name type="common">Methylobacterium extorquens</name>
    <dbReference type="NCBI Taxonomy" id="419610"/>
    <lineage>
        <taxon>Bacteria</taxon>
        <taxon>Pseudomonadati</taxon>
        <taxon>Pseudomonadota</taxon>
        <taxon>Alphaproteobacteria</taxon>
        <taxon>Hyphomicrobiales</taxon>
        <taxon>Methylobacteriaceae</taxon>
        <taxon>Methylorubrum</taxon>
    </lineage>
</organism>
<gene>
    <name evidence="1" type="primary">bchL</name>
    <name type="ordered locus">Mext_4813</name>
</gene>
<dbReference type="EC" id="1.3.7.7" evidence="1"/>
<dbReference type="EMBL" id="CP000908">
    <property type="protein sequence ID" value="ABY33181.1"/>
    <property type="molecule type" value="Genomic_DNA"/>
</dbReference>
<dbReference type="RefSeq" id="WP_012255845.1">
    <property type="nucleotide sequence ID" value="NC_010172.1"/>
</dbReference>
<dbReference type="SMR" id="A9W9E2"/>
<dbReference type="KEGG" id="mex:Mext_4813"/>
<dbReference type="eggNOG" id="COG1348">
    <property type="taxonomic scope" value="Bacteria"/>
</dbReference>
<dbReference type="HOGENOM" id="CLU_059373_2_0_5"/>
<dbReference type="BioCyc" id="MEXT419610:MEXT_RS24195-MONOMER"/>
<dbReference type="UniPathway" id="UPA00671"/>
<dbReference type="GO" id="GO:0051539">
    <property type="term" value="F:4 iron, 4 sulfur cluster binding"/>
    <property type="evidence" value="ECO:0007669"/>
    <property type="project" value="UniProtKB-UniRule"/>
</dbReference>
<dbReference type="GO" id="GO:0005524">
    <property type="term" value="F:ATP binding"/>
    <property type="evidence" value="ECO:0007669"/>
    <property type="project" value="UniProtKB-UniRule"/>
</dbReference>
<dbReference type="GO" id="GO:0046872">
    <property type="term" value="F:metal ion binding"/>
    <property type="evidence" value="ECO:0007669"/>
    <property type="project" value="UniProtKB-KW"/>
</dbReference>
<dbReference type="GO" id="GO:0016730">
    <property type="term" value="F:oxidoreductase activity, acting on iron-sulfur proteins as donors"/>
    <property type="evidence" value="ECO:0007669"/>
    <property type="project" value="InterPro"/>
</dbReference>
<dbReference type="GO" id="GO:0016636">
    <property type="term" value="F:oxidoreductase activity, acting on the CH-CH group of donors, iron-sulfur protein as acceptor"/>
    <property type="evidence" value="ECO:0007669"/>
    <property type="project" value="UniProtKB-UniRule"/>
</dbReference>
<dbReference type="GO" id="GO:0036070">
    <property type="term" value="P:light-independent bacteriochlorophyll biosynthetic process"/>
    <property type="evidence" value="ECO:0007669"/>
    <property type="project" value="UniProtKB-UniRule"/>
</dbReference>
<dbReference type="GO" id="GO:0019685">
    <property type="term" value="P:photosynthesis, dark reaction"/>
    <property type="evidence" value="ECO:0007669"/>
    <property type="project" value="InterPro"/>
</dbReference>
<dbReference type="CDD" id="cd02032">
    <property type="entry name" value="Bchl-like"/>
    <property type="match status" value="1"/>
</dbReference>
<dbReference type="Gene3D" id="3.40.50.300">
    <property type="entry name" value="P-loop containing nucleotide triphosphate hydrolases"/>
    <property type="match status" value="1"/>
</dbReference>
<dbReference type="HAMAP" id="MF_00355">
    <property type="entry name" value="ChlL_BchL"/>
    <property type="match status" value="1"/>
</dbReference>
<dbReference type="InterPro" id="IPR030655">
    <property type="entry name" value="NifH/chlL_CS"/>
</dbReference>
<dbReference type="InterPro" id="IPR000392">
    <property type="entry name" value="NifH/frxC"/>
</dbReference>
<dbReference type="InterPro" id="IPR027417">
    <property type="entry name" value="P-loop_NTPase"/>
</dbReference>
<dbReference type="InterPro" id="IPR005971">
    <property type="entry name" value="Protochlorophyllide_ATP-bd"/>
</dbReference>
<dbReference type="NCBIfam" id="TIGR01281">
    <property type="entry name" value="DPOR_bchL"/>
    <property type="match status" value="1"/>
</dbReference>
<dbReference type="PANTHER" id="PTHR42864">
    <property type="entry name" value="LIGHT-INDEPENDENT PROTOCHLOROPHYLLIDE REDUCTASE IRON-SULFUR ATP-BINDING PROTEIN"/>
    <property type="match status" value="1"/>
</dbReference>
<dbReference type="PANTHER" id="PTHR42864:SF2">
    <property type="entry name" value="LIGHT-INDEPENDENT PROTOCHLOROPHYLLIDE REDUCTASE IRON-SULFUR ATP-BINDING PROTEIN"/>
    <property type="match status" value="1"/>
</dbReference>
<dbReference type="Pfam" id="PF00142">
    <property type="entry name" value="Fer4_NifH"/>
    <property type="match status" value="1"/>
</dbReference>
<dbReference type="PIRSF" id="PIRSF000363">
    <property type="entry name" value="Nitrogenase_iron"/>
    <property type="match status" value="1"/>
</dbReference>
<dbReference type="PRINTS" id="PR00091">
    <property type="entry name" value="NITROGNASEII"/>
</dbReference>
<dbReference type="SUPFAM" id="SSF52540">
    <property type="entry name" value="P-loop containing nucleoside triphosphate hydrolases"/>
    <property type="match status" value="1"/>
</dbReference>
<dbReference type="PROSITE" id="PS00746">
    <property type="entry name" value="NIFH_FRXC_1"/>
    <property type="match status" value="1"/>
</dbReference>
<dbReference type="PROSITE" id="PS00692">
    <property type="entry name" value="NIFH_FRXC_2"/>
    <property type="match status" value="1"/>
</dbReference>
<dbReference type="PROSITE" id="PS51026">
    <property type="entry name" value="NIFH_FRXC_3"/>
    <property type="match status" value="1"/>
</dbReference>
<proteinExistence type="inferred from homology"/>
<protein>
    <recommendedName>
        <fullName evidence="1">Light-independent protochlorophyllide reductase iron-sulfur ATP-binding protein</fullName>
        <shortName evidence="1">DPOR subunit L</shortName>
        <shortName evidence="1">LI-POR subunit L</shortName>
        <ecNumber evidence="1">1.3.7.7</ecNumber>
    </recommendedName>
</protein>